<accession>C0H464</accession>
<gene>
    <name type="primary">yrzT</name>
    <name type="ordered locus">BSU27809</name>
</gene>
<proteinExistence type="predicted"/>
<keyword id="KW-1003">Cell membrane</keyword>
<keyword id="KW-0472">Membrane</keyword>
<keyword id="KW-1185">Reference proteome</keyword>
<keyword id="KW-0812">Transmembrane</keyword>
<keyword id="KW-1133">Transmembrane helix</keyword>
<name>YRZT_BACSU</name>
<sequence length="46" mass="5257">MNKMNGTNDEKHFNHFVIALSFIYGLTELGYLLLKDFITIAISLPL</sequence>
<reference key="1">
    <citation type="journal article" date="1997" name="Nature">
        <title>The complete genome sequence of the Gram-positive bacterium Bacillus subtilis.</title>
        <authorList>
            <person name="Kunst F."/>
            <person name="Ogasawara N."/>
            <person name="Moszer I."/>
            <person name="Albertini A.M."/>
            <person name="Alloni G."/>
            <person name="Azevedo V."/>
            <person name="Bertero M.G."/>
            <person name="Bessieres P."/>
            <person name="Bolotin A."/>
            <person name="Borchert S."/>
            <person name="Borriss R."/>
            <person name="Boursier L."/>
            <person name="Brans A."/>
            <person name="Braun M."/>
            <person name="Brignell S.C."/>
            <person name="Bron S."/>
            <person name="Brouillet S."/>
            <person name="Bruschi C.V."/>
            <person name="Caldwell B."/>
            <person name="Capuano V."/>
            <person name="Carter N.M."/>
            <person name="Choi S.-K."/>
            <person name="Codani J.-J."/>
            <person name="Connerton I.F."/>
            <person name="Cummings N.J."/>
            <person name="Daniel R.A."/>
            <person name="Denizot F."/>
            <person name="Devine K.M."/>
            <person name="Duesterhoeft A."/>
            <person name="Ehrlich S.D."/>
            <person name="Emmerson P.T."/>
            <person name="Entian K.-D."/>
            <person name="Errington J."/>
            <person name="Fabret C."/>
            <person name="Ferrari E."/>
            <person name="Foulger D."/>
            <person name="Fritz C."/>
            <person name="Fujita M."/>
            <person name="Fujita Y."/>
            <person name="Fuma S."/>
            <person name="Galizzi A."/>
            <person name="Galleron N."/>
            <person name="Ghim S.-Y."/>
            <person name="Glaser P."/>
            <person name="Goffeau A."/>
            <person name="Golightly E.J."/>
            <person name="Grandi G."/>
            <person name="Guiseppi G."/>
            <person name="Guy B.J."/>
            <person name="Haga K."/>
            <person name="Haiech J."/>
            <person name="Harwood C.R."/>
            <person name="Henaut A."/>
            <person name="Hilbert H."/>
            <person name="Holsappel S."/>
            <person name="Hosono S."/>
            <person name="Hullo M.-F."/>
            <person name="Itaya M."/>
            <person name="Jones L.-M."/>
            <person name="Joris B."/>
            <person name="Karamata D."/>
            <person name="Kasahara Y."/>
            <person name="Klaerr-Blanchard M."/>
            <person name="Klein C."/>
            <person name="Kobayashi Y."/>
            <person name="Koetter P."/>
            <person name="Koningstein G."/>
            <person name="Krogh S."/>
            <person name="Kumano M."/>
            <person name="Kurita K."/>
            <person name="Lapidus A."/>
            <person name="Lardinois S."/>
            <person name="Lauber J."/>
            <person name="Lazarevic V."/>
            <person name="Lee S.-M."/>
            <person name="Levine A."/>
            <person name="Liu H."/>
            <person name="Masuda S."/>
            <person name="Mauel C."/>
            <person name="Medigue C."/>
            <person name="Medina N."/>
            <person name="Mellado R.P."/>
            <person name="Mizuno M."/>
            <person name="Moestl D."/>
            <person name="Nakai S."/>
            <person name="Noback M."/>
            <person name="Noone D."/>
            <person name="O'Reilly M."/>
            <person name="Ogawa K."/>
            <person name="Ogiwara A."/>
            <person name="Oudega B."/>
            <person name="Park S.-H."/>
            <person name="Parro V."/>
            <person name="Pohl T.M."/>
            <person name="Portetelle D."/>
            <person name="Porwollik S."/>
            <person name="Prescott A.M."/>
            <person name="Presecan E."/>
            <person name="Pujic P."/>
            <person name="Purnelle B."/>
            <person name="Rapoport G."/>
            <person name="Rey M."/>
            <person name="Reynolds S."/>
            <person name="Rieger M."/>
            <person name="Rivolta C."/>
            <person name="Rocha E."/>
            <person name="Roche B."/>
            <person name="Rose M."/>
            <person name="Sadaie Y."/>
            <person name="Sato T."/>
            <person name="Scanlan E."/>
            <person name="Schleich S."/>
            <person name="Schroeter R."/>
            <person name="Scoffone F."/>
            <person name="Sekiguchi J."/>
            <person name="Sekowska A."/>
            <person name="Seror S.J."/>
            <person name="Serror P."/>
            <person name="Shin B.-S."/>
            <person name="Soldo B."/>
            <person name="Sorokin A."/>
            <person name="Tacconi E."/>
            <person name="Takagi T."/>
            <person name="Takahashi H."/>
            <person name="Takemaru K."/>
            <person name="Takeuchi M."/>
            <person name="Tamakoshi A."/>
            <person name="Tanaka T."/>
            <person name="Terpstra P."/>
            <person name="Tognoni A."/>
            <person name="Tosato V."/>
            <person name="Uchiyama S."/>
            <person name="Vandenbol M."/>
            <person name="Vannier F."/>
            <person name="Vassarotti A."/>
            <person name="Viari A."/>
            <person name="Wambutt R."/>
            <person name="Wedler E."/>
            <person name="Wedler H."/>
            <person name="Weitzenegger T."/>
            <person name="Winters P."/>
            <person name="Wipat A."/>
            <person name="Yamamoto H."/>
            <person name="Yamane K."/>
            <person name="Yasumoto K."/>
            <person name="Yata K."/>
            <person name="Yoshida K."/>
            <person name="Yoshikawa H.-F."/>
            <person name="Zumstein E."/>
            <person name="Yoshikawa H."/>
            <person name="Danchin A."/>
        </authorList>
    </citation>
    <scope>NUCLEOTIDE SEQUENCE [LARGE SCALE GENOMIC DNA]</scope>
    <source>
        <strain>168</strain>
    </source>
</reference>
<protein>
    <recommendedName>
        <fullName>Uncharacterized membrane protein YrzT</fullName>
    </recommendedName>
</protein>
<comment type="subcellular location">
    <subcellularLocation>
        <location evidence="2">Cell membrane</location>
        <topology evidence="2">Single-pass membrane protein</topology>
    </subcellularLocation>
</comment>
<evidence type="ECO:0000255" key="1"/>
<evidence type="ECO:0000305" key="2"/>
<dbReference type="EMBL" id="AL009126">
    <property type="protein sequence ID" value="CAX52675.1"/>
    <property type="molecule type" value="Genomic_DNA"/>
</dbReference>
<dbReference type="RefSeq" id="WP_004398683.1">
    <property type="nucleotide sequence ID" value="NZ_OZ025638.1"/>
</dbReference>
<dbReference type="RefSeq" id="YP_003097769.1">
    <property type="nucleotide sequence ID" value="NC_000964.3"/>
</dbReference>
<dbReference type="FunCoup" id="C0H464">
    <property type="interactions" value="1"/>
</dbReference>
<dbReference type="STRING" id="224308.BSU27809"/>
<dbReference type="PaxDb" id="224308-BSU27809"/>
<dbReference type="EnsemblBacteria" id="CAX52675">
    <property type="protein sequence ID" value="CAX52675"/>
    <property type="gene ID" value="BSU_27809"/>
</dbReference>
<dbReference type="GeneID" id="8303183"/>
<dbReference type="KEGG" id="bsu:BSU27809"/>
<dbReference type="PATRIC" id="fig|224308.179.peg.3021"/>
<dbReference type="InParanoid" id="C0H464"/>
<dbReference type="OrthoDB" id="9865438at2"/>
<dbReference type="BioCyc" id="BSUB:BSU27809-MONOMER"/>
<dbReference type="Proteomes" id="UP000001570">
    <property type="component" value="Chromosome"/>
</dbReference>
<dbReference type="GO" id="GO:0005886">
    <property type="term" value="C:plasma membrane"/>
    <property type="evidence" value="ECO:0007669"/>
    <property type="project" value="UniProtKB-SubCell"/>
</dbReference>
<organism>
    <name type="scientific">Bacillus subtilis (strain 168)</name>
    <dbReference type="NCBI Taxonomy" id="224308"/>
    <lineage>
        <taxon>Bacteria</taxon>
        <taxon>Bacillati</taxon>
        <taxon>Bacillota</taxon>
        <taxon>Bacilli</taxon>
        <taxon>Bacillales</taxon>
        <taxon>Bacillaceae</taxon>
        <taxon>Bacillus</taxon>
    </lineage>
</organism>
<feature type="chain" id="PRO_0000382213" description="Uncharacterized membrane protein YrzT">
    <location>
        <begin position="1"/>
        <end position="46"/>
    </location>
</feature>
<feature type="transmembrane region" description="Helical" evidence="1">
    <location>
        <begin position="12"/>
        <end position="34"/>
    </location>
</feature>